<organism>
    <name type="scientific">Haemophilus influenzae (strain ATCC 51907 / DSM 11121 / KW20 / Rd)</name>
    <dbReference type="NCBI Taxonomy" id="71421"/>
    <lineage>
        <taxon>Bacteria</taxon>
        <taxon>Pseudomonadati</taxon>
        <taxon>Pseudomonadota</taxon>
        <taxon>Gammaproteobacteria</taxon>
        <taxon>Pasteurellales</taxon>
        <taxon>Pasteurellaceae</taxon>
        <taxon>Haemophilus</taxon>
    </lineage>
</organism>
<accession>P44640</accession>
<comment type="subcellular location">
    <subcellularLocation>
        <location evidence="2">Cell membrane</location>
        <topology evidence="2">Multi-pass membrane protein</topology>
    </subcellularLocation>
</comment>
<gene>
    <name type="ordered locus">HI_0325</name>
</gene>
<proteinExistence type="predicted"/>
<name>Y325_HAEIN</name>
<protein>
    <recommendedName>
        <fullName>Uncharacterized membrane protein HI_0325</fullName>
    </recommendedName>
</protein>
<dbReference type="EMBL" id="L42023">
    <property type="protein sequence ID" value="AAC21988.1"/>
    <property type="molecule type" value="Genomic_DNA"/>
</dbReference>
<dbReference type="PIR" id="A64148">
    <property type="entry name" value="A64148"/>
</dbReference>
<dbReference type="RefSeq" id="NP_438490.1">
    <property type="nucleotide sequence ID" value="NC_000907.1"/>
</dbReference>
<dbReference type="SMR" id="P44640"/>
<dbReference type="STRING" id="71421.HI_0325"/>
<dbReference type="EnsemblBacteria" id="AAC21988">
    <property type="protein sequence ID" value="AAC21988"/>
    <property type="gene ID" value="HI_0325"/>
</dbReference>
<dbReference type="KEGG" id="hin:HI_0325"/>
<dbReference type="PATRIC" id="fig|71421.8.peg.342"/>
<dbReference type="eggNOG" id="COG2056">
    <property type="taxonomic scope" value="Bacteria"/>
</dbReference>
<dbReference type="HOGENOM" id="CLU_037927_0_0_6"/>
<dbReference type="OrthoDB" id="9772446at2"/>
<dbReference type="PhylomeDB" id="P44640"/>
<dbReference type="BioCyc" id="HINF71421:G1GJ1-341-MONOMER"/>
<dbReference type="Proteomes" id="UP000000579">
    <property type="component" value="Chromosome"/>
</dbReference>
<dbReference type="GO" id="GO:0005886">
    <property type="term" value="C:plasma membrane"/>
    <property type="evidence" value="ECO:0007669"/>
    <property type="project" value="UniProtKB-SubCell"/>
</dbReference>
<dbReference type="InterPro" id="IPR052576">
    <property type="entry name" value="AA_Transporter-Related"/>
</dbReference>
<dbReference type="InterPro" id="IPR018461">
    <property type="entry name" value="Na/H_Antiport_NhaC-like_C"/>
</dbReference>
<dbReference type="InterPro" id="IPR032813">
    <property type="entry name" value="Na_H_antiport_N"/>
</dbReference>
<dbReference type="PANTHER" id="PTHR37821">
    <property type="entry name" value="AMINO ACID TRANSPORTER YUIF-RELATED"/>
    <property type="match status" value="1"/>
</dbReference>
<dbReference type="PANTHER" id="PTHR37821:SF1">
    <property type="entry name" value="AMINO ACID TRANSPORTER YUIF-RELATED"/>
    <property type="match status" value="1"/>
</dbReference>
<dbReference type="Pfam" id="PF13726">
    <property type="entry name" value="Na_H_antiport_2"/>
    <property type="match status" value="1"/>
</dbReference>
<dbReference type="Pfam" id="PF03553">
    <property type="entry name" value="Na_H_antiporter"/>
    <property type="match status" value="1"/>
</dbReference>
<keyword id="KW-1003">Cell membrane</keyword>
<keyword id="KW-0472">Membrane</keyword>
<keyword id="KW-1185">Reference proteome</keyword>
<keyword id="KW-0812">Transmembrane</keyword>
<keyword id="KW-1133">Transmembrane helix</keyword>
<evidence type="ECO:0000255" key="1"/>
<evidence type="ECO:0000305" key="2"/>
<feature type="chain" id="PRO_0000077911" description="Uncharacterized membrane protein HI_0325">
    <location>
        <begin position="1"/>
        <end position="450"/>
    </location>
</feature>
<feature type="transmembrane region" description="Helical" evidence="1">
    <location>
        <begin position="10"/>
        <end position="30"/>
    </location>
</feature>
<feature type="transmembrane region" description="Helical" evidence="1">
    <location>
        <begin position="53"/>
        <end position="73"/>
    </location>
</feature>
<feature type="transmembrane region" description="Helical" evidence="1">
    <location>
        <begin position="95"/>
        <end position="115"/>
    </location>
</feature>
<feature type="transmembrane region" description="Helical" evidence="1">
    <location>
        <begin position="120"/>
        <end position="140"/>
    </location>
</feature>
<feature type="transmembrane region" description="Helical" evidence="1">
    <location>
        <begin position="148"/>
        <end position="168"/>
    </location>
</feature>
<feature type="transmembrane region" description="Helical" evidence="1">
    <location>
        <begin position="199"/>
        <end position="219"/>
    </location>
</feature>
<feature type="transmembrane region" description="Helical" evidence="1">
    <location>
        <begin position="242"/>
        <end position="262"/>
    </location>
</feature>
<feature type="transmembrane region" description="Helical" evidence="1">
    <location>
        <begin position="267"/>
        <end position="287"/>
    </location>
</feature>
<feature type="transmembrane region" description="Helical" evidence="1">
    <location>
        <begin position="302"/>
        <end position="322"/>
    </location>
</feature>
<feature type="transmembrane region" description="Helical" evidence="1">
    <location>
        <begin position="343"/>
        <end position="363"/>
    </location>
</feature>
<feature type="transmembrane region" description="Helical" evidence="1">
    <location>
        <begin position="378"/>
        <end position="398"/>
    </location>
</feature>
<feature type="transmembrane region" description="Helical" evidence="1">
    <location>
        <begin position="428"/>
        <end position="448"/>
    </location>
</feature>
<reference key="1">
    <citation type="journal article" date="1995" name="Science">
        <title>Whole-genome random sequencing and assembly of Haemophilus influenzae Rd.</title>
        <authorList>
            <person name="Fleischmann R.D."/>
            <person name="Adams M.D."/>
            <person name="White O."/>
            <person name="Clayton R.A."/>
            <person name="Kirkness E.F."/>
            <person name="Kerlavage A.R."/>
            <person name="Bult C.J."/>
            <person name="Tomb J.-F."/>
            <person name="Dougherty B.A."/>
            <person name="Merrick J.M."/>
            <person name="McKenney K."/>
            <person name="Sutton G.G."/>
            <person name="FitzHugh W."/>
            <person name="Fields C.A."/>
            <person name="Gocayne J.D."/>
            <person name="Scott J.D."/>
            <person name="Shirley R."/>
            <person name="Liu L.-I."/>
            <person name="Glodek A."/>
            <person name="Kelley J.M."/>
            <person name="Weidman J.F."/>
            <person name="Phillips C.A."/>
            <person name="Spriggs T."/>
            <person name="Hedblom E."/>
            <person name="Cotton M.D."/>
            <person name="Utterback T.R."/>
            <person name="Hanna M.C."/>
            <person name="Nguyen D.T."/>
            <person name="Saudek D.M."/>
            <person name="Brandon R.C."/>
            <person name="Fine L.D."/>
            <person name="Fritchman J.L."/>
            <person name="Fuhrmann J.L."/>
            <person name="Geoghagen N.S.M."/>
            <person name="Gnehm C.L."/>
            <person name="McDonald L.A."/>
            <person name="Small K.V."/>
            <person name="Fraser C.M."/>
            <person name="Smith H.O."/>
            <person name="Venter J.C."/>
        </authorList>
    </citation>
    <scope>NUCLEOTIDE SEQUENCE [LARGE SCALE GENOMIC DNA]</scope>
    <source>
        <strain>ATCC 51907 / DSM 11121 / KW20 / Rd</strain>
    </source>
</reference>
<sequence length="450" mass="47440">MLSNPVVISIIVLLALSLLRINVIIALVIAALTAGFIGDLGLTKTIETFTGGLGGGAEVAMNYAILGAFAIAISKSGITDLIAYKIITKMNKTPTAGNLTWFKYFIFAVLALFAISSQNLLPVHIAFIPIVVPPLLSIFNRLKIDRRAVACVLTFGLTATYILLPVGFGKIFIESILVKNINQAGATLGLQTNVAQVSLAMLLPVIGMILGLLTAIFITYRKPREYNINVEEATTKDIEAHIANIKPKQIVASLIAIVATFATQLVTSSTIIGGLIGLIIFVLCGIFKLKESNDIFQQGLRLMAMIGFVMIAASGFANVINATTGVTDLVQSLSSGVVQSKGIAALLMLVVGLLITMGIGSSFSTVPIITSIYVPLCLSFGFSPLATISIVGVAAALGDAGSPASDSTLGPTSGLNMDGKHDHIWDSVVPTFIHYNIPLLVFGWIAAMYL</sequence>